<dbReference type="EMBL" id="AE009950">
    <property type="protein sequence ID" value="AAL82089.1"/>
    <property type="molecule type" value="Genomic_DNA"/>
</dbReference>
<dbReference type="RefSeq" id="WP_011013107.1">
    <property type="nucleotide sequence ID" value="NZ_CP023154.1"/>
</dbReference>
<dbReference type="SMR" id="Q8TZM5"/>
<dbReference type="STRING" id="186497.PF1965"/>
<dbReference type="PaxDb" id="186497-PF1965"/>
<dbReference type="KEGG" id="pfu:PF1965"/>
<dbReference type="PATRIC" id="fig|186497.12.peg.2038"/>
<dbReference type="eggNOG" id="arCOG01988">
    <property type="taxonomic scope" value="Archaea"/>
</dbReference>
<dbReference type="HOGENOM" id="CLU_165896_0_0_2"/>
<dbReference type="OrthoDB" id="84643at2157"/>
<dbReference type="PhylomeDB" id="Q8TZM5"/>
<dbReference type="Proteomes" id="UP000001013">
    <property type="component" value="Chromosome"/>
</dbReference>
<dbReference type="GO" id="GO:0003746">
    <property type="term" value="F:translation elongation factor activity"/>
    <property type="evidence" value="ECO:0007669"/>
    <property type="project" value="UniProtKB-UniRule"/>
</dbReference>
<dbReference type="CDD" id="cd00292">
    <property type="entry name" value="EF1B"/>
    <property type="match status" value="1"/>
</dbReference>
<dbReference type="Gene3D" id="3.30.70.60">
    <property type="match status" value="1"/>
</dbReference>
<dbReference type="HAMAP" id="MF_00043">
    <property type="entry name" value="EF1_beta"/>
    <property type="match status" value="1"/>
</dbReference>
<dbReference type="InterPro" id="IPR036219">
    <property type="entry name" value="eEF-1beta-like_sf"/>
</dbReference>
<dbReference type="InterPro" id="IPR014038">
    <property type="entry name" value="EF1B_bsu/dsu_GNE"/>
</dbReference>
<dbReference type="InterPro" id="IPR014717">
    <property type="entry name" value="Transl_elong_EF1B/ribsomal_bS6"/>
</dbReference>
<dbReference type="InterPro" id="IPR004542">
    <property type="entry name" value="Transl_elong_EF1B_B_arc"/>
</dbReference>
<dbReference type="NCBIfam" id="TIGR00489">
    <property type="entry name" value="aEF-1_beta"/>
    <property type="match status" value="1"/>
</dbReference>
<dbReference type="NCBIfam" id="NF001670">
    <property type="entry name" value="PRK00435.1"/>
    <property type="match status" value="1"/>
</dbReference>
<dbReference type="PANTHER" id="PTHR39647">
    <property type="entry name" value="ELONGATION FACTOR 1-BETA"/>
    <property type="match status" value="1"/>
</dbReference>
<dbReference type="PANTHER" id="PTHR39647:SF1">
    <property type="entry name" value="ELONGATION FACTOR 1-BETA"/>
    <property type="match status" value="1"/>
</dbReference>
<dbReference type="Pfam" id="PF00736">
    <property type="entry name" value="EF1_GNE"/>
    <property type="match status" value="1"/>
</dbReference>
<dbReference type="PIRSF" id="PIRSF006521">
    <property type="entry name" value="Transl_elong_EF1B_B_arc"/>
    <property type="match status" value="1"/>
</dbReference>
<dbReference type="SMART" id="SM00888">
    <property type="entry name" value="EF1_GNE"/>
    <property type="match status" value="1"/>
</dbReference>
<dbReference type="SUPFAM" id="SSF54984">
    <property type="entry name" value="eEF-1beta-like"/>
    <property type="match status" value="1"/>
</dbReference>
<sequence>MGDFNLVGVIRVMPTDPEVNLDELEEKLKALIPEKYGLAKVEREPIAFGLVALKFYVLGRDEEGYSFDEIAEKFQEVEEVESAEVETVSRI</sequence>
<organism>
    <name type="scientific">Pyrococcus furiosus (strain ATCC 43587 / DSM 3638 / JCM 8422 / Vc1)</name>
    <dbReference type="NCBI Taxonomy" id="186497"/>
    <lineage>
        <taxon>Archaea</taxon>
        <taxon>Methanobacteriati</taxon>
        <taxon>Methanobacteriota</taxon>
        <taxon>Thermococci</taxon>
        <taxon>Thermococcales</taxon>
        <taxon>Thermococcaceae</taxon>
        <taxon>Pyrococcus</taxon>
    </lineage>
</organism>
<protein>
    <recommendedName>
        <fullName evidence="1">Elongation factor 1-beta</fullName>
        <shortName evidence="1">EF-1-beta</shortName>
    </recommendedName>
    <alternativeName>
        <fullName evidence="1">aEF-1beta</fullName>
    </alternativeName>
</protein>
<reference key="1">
    <citation type="journal article" date="1999" name="Genetics">
        <title>Divergence of the hyperthermophilic archaea Pyrococcus furiosus and P. horikoshii inferred from complete genomic sequences.</title>
        <authorList>
            <person name="Maeder D.L."/>
            <person name="Weiss R.B."/>
            <person name="Dunn D.M."/>
            <person name="Cherry J.L."/>
            <person name="Gonzalez J.M."/>
            <person name="DiRuggiero J."/>
            <person name="Robb F.T."/>
        </authorList>
    </citation>
    <scope>NUCLEOTIDE SEQUENCE [LARGE SCALE GENOMIC DNA]</scope>
    <source>
        <strain>ATCC 43587 / DSM 3638 / JCM 8422 / Vc1</strain>
    </source>
</reference>
<name>EF1B_PYRFU</name>
<evidence type="ECO:0000255" key="1">
    <source>
        <dbReference type="HAMAP-Rule" id="MF_00043"/>
    </source>
</evidence>
<accession>Q8TZM5</accession>
<comment type="function">
    <text evidence="1">Promotes the exchange of GDP for GTP in EF-1-alpha/GDP, thus allowing the regeneration of EF-1-alpha/GTP that could then be used to form the ternary complex EF-1-alpha/GTP/AAtRNA.</text>
</comment>
<comment type="similarity">
    <text evidence="1">Belongs to the EF-1-beta/EF-1-delta family.</text>
</comment>
<keyword id="KW-0251">Elongation factor</keyword>
<keyword id="KW-0648">Protein biosynthesis</keyword>
<keyword id="KW-1185">Reference proteome</keyword>
<feature type="chain" id="PRO_0000155064" description="Elongation factor 1-beta">
    <location>
        <begin position="1"/>
        <end position="91"/>
    </location>
</feature>
<proteinExistence type="inferred from homology"/>
<gene>
    <name evidence="1" type="primary">ef1b</name>
    <name type="ordered locus">PF1965</name>
</gene>